<dbReference type="EMBL" id="AY050274">
    <property type="protein sequence ID" value="AAL11030.1"/>
    <property type="molecule type" value="mRNA"/>
</dbReference>
<dbReference type="SMR" id="Q8JNB1"/>
<dbReference type="GO" id="GO:0044172">
    <property type="term" value="C:host cell endoplasmic reticulum-Golgi intermediate compartment"/>
    <property type="evidence" value="ECO:0007669"/>
    <property type="project" value="UniProtKB-SubCell"/>
</dbReference>
<dbReference type="GO" id="GO:0020002">
    <property type="term" value="C:host cell plasma membrane"/>
    <property type="evidence" value="ECO:0007669"/>
    <property type="project" value="UniProtKB-SubCell"/>
</dbReference>
<dbReference type="GO" id="GO:0044168">
    <property type="term" value="C:host cell rough endoplasmic reticulum"/>
    <property type="evidence" value="ECO:0007669"/>
    <property type="project" value="UniProtKB-SubCell"/>
</dbReference>
<dbReference type="GO" id="GO:0044163">
    <property type="term" value="C:host cytoskeleton"/>
    <property type="evidence" value="ECO:0007669"/>
    <property type="project" value="UniProtKB-SubCell"/>
</dbReference>
<dbReference type="GO" id="GO:0016020">
    <property type="term" value="C:membrane"/>
    <property type="evidence" value="ECO:0007669"/>
    <property type="project" value="UniProtKB-KW"/>
</dbReference>
<dbReference type="GO" id="GO:0039624">
    <property type="term" value="C:viral outer capsid"/>
    <property type="evidence" value="ECO:0007669"/>
    <property type="project" value="UniProtKB-UniRule"/>
</dbReference>
<dbReference type="GO" id="GO:0039665">
    <property type="term" value="P:permeabilization of host organelle membrane involved in viral entry into host cell"/>
    <property type="evidence" value="ECO:0007669"/>
    <property type="project" value="UniProtKB-UniRule"/>
</dbReference>
<dbReference type="GO" id="GO:0019062">
    <property type="term" value="P:virion attachment to host cell"/>
    <property type="evidence" value="ECO:0007669"/>
    <property type="project" value="UniProtKB-UniRule"/>
</dbReference>
<dbReference type="Gene3D" id="1.20.5.170">
    <property type="match status" value="1"/>
</dbReference>
<dbReference type="Gene3D" id="2.60.120.200">
    <property type="match status" value="1"/>
</dbReference>
<dbReference type="HAMAP" id="MF_04132">
    <property type="entry name" value="Rota_A_VP4"/>
    <property type="match status" value="1"/>
</dbReference>
<dbReference type="HAMAP" id="MF_04125">
    <property type="entry name" value="Rota_VP4"/>
    <property type="match status" value="1"/>
</dbReference>
<dbReference type="InterPro" id="IPR013320">
    <property type="entry name" value="ConA-like_dom_sf"/>
</dbReference>
<dbReference type="InterPro" id="IPR042546">
    <property type="entry name" value="Rota_A_VP4"/>
</dbReference>
<dbReference type="InterPro" id="IPR035330">
    <property type="entry name" value="Rota_VP4_MID"/>
</dbReference>
<dbReference type="InterPro" id="IPR038017">
    <property type="entry name" value="Rota_VP4_MID_sf"/>
</dbReference>
<dbReference type="InterPro" id="IPR000416">
    <property type="entry name" value="VP4_concanavalin-like"/>
</dbReference>
<dbReference type="InterPro" id="IPR035329">
    <property type="entry name" value="VP4_helical"/>
</dbReference>
<dbReference type="Pfam" id="PF17477">
    <property type="entry name" value="Rota_VP4_MID"/>
    <property type="match status" value="1"/>
</dbReference>
<dbReference type="Pfam" id="PF00426">
    <property type="entry name" value="VP4_haemagglut"/>
    <property type="match status" value="1"/>
</dbReference>
<dbReference type="Pfam" id="PF17478">
    <property type="entry name" value="VP4_helical"/>
    <property type="match status" value="1"/>
</dbReference>
<dbReference type="SUPFAM" id="SSF49899">
    <property type="entry name" value="Concanavalin A-like lectins/glucanases"/>
    <property type="match status" value="1"/>
</dbReference>
<dbReference type="SUPFAM" id="SSF111379">
    <property type="entry name" value="VP4 membrane interaction domain"/>
    <property type="match status" value="1"/>
</dbReference>
<organism>
    <name type="scientific">Rotavirus A (isolate RVA/Pig/Venezuela/A46/1985/G5P13[13])</name>
    <name type="common">RV-A</name>
    <dbReference type="NCBI Taxonomy" id="578841"/>
    <lineage>
        <taxon>Viruses</taxon>
        <taxon>Riboviria</taxon>
        <taxon>Orthornavirae</taxon>
        <taxon>Duplornaviricota</taxon>
        <taxon>Resentoviricetes</taxon>
        <taxon>Reovirales</taxon>
        <taxon>Sedoreoviridae</taxon>
        <taxon>Rotavirus</taxon>
        <taxon>Rotavirus A</taxon>
    </lineage>
</organism>
<evidence type="ECO:0000255" key="1">
    <source>
        <dbReference type="HAMAP-Rule" id="MF_04132"/>
    </source>
</evidence>
<evidence type="ECO:0000269" key="2">
    <source>
    </source>
</evidence>
<evidence type="ECO:0000303" key="3">
    <source>
    </source>
</evidence>
<sequence length="778" mass="87232">MASLIYRQLLTNSYTTDLSDEIEEIGSSKSQDVTINPGPFAQTGYAPVDWGLGETNDSTTVAPVLDGPYQPITFTPPIEYWALFAPNDKGVVAELTNNADMWLVIILVEPNVPQELRLYTLFGQQVNLTIENTSQTKWKFIDFRKRSQNDTYILENALLSETKLQAAMKYGGKLFTFTGDTPNAAPQEWGYTTNNYSAISIKSLCDFYIVPRLPRETCRNYINQGLPPMQNTRNVVSVALSARDVISQRVSINEDIVVSKASLWKEMQYNRDITIRFKFANQIIKSGGLGYKWSEISFKPANYQYTYTRNGEEITAHTTCSVNGVNNFSYNGGSLPTDFVISRYEVIKENSYVYIDYWDDSQAFRNMVYVRSLAADLNSVTCSGGSYSFALPLGNFPVMSGGAVSLHPSGVTLSTQFTDFVSLNSLRFRFRLAVEEPPFSITRTRVSRLYGLPAVNPNNAKDFYEIAGRFSLISLIPPNDDYQTPIMNSVTVRQDLERQLGELRNEFNALSQQIAMSQLIDLALLPLDMFSMFSGIKGTIDIAKSMATNVMKKFRKSNLANSVSALTESLSDAASSISRRSTIRTIGSSASAWTEVSTAVIDTTTATNSISTQTATITKRLRLKEMAIQTDGMNFDDISAAVLKTKIDKSTQIAPNTLPDIVTEASEKFIPNRAYRVMDNDEVFEAGTDGKFFAYRVETFEEIPFDVQKFADLITDSPVISAIIDFKTLKNLNDNYGITKQQAYNLLRSDPRVLREFINQENPIIRNRIENLIMQCRL</sequence>
<name>VP4_ROT46</name>
<keyword id="KW-0167">Capsid protein</keyword>
<keyword id="KW-0175">Coiled coil</keyword>
<keyword id="KW-1015">Disulfide bond</keyword>
<keyword id="KW-0348">Hemagglutinin</keyword>
<keyword id="KW-1032">Host cell membrane</keyword>
<keyword id="KW-1035">Host cytoplasm</keyword>
<keyword id="KW-1037">Host cytoskeleton</keyword>
<keyword id="KW-1038">Host endoplasmic reticulum</keyword>
<keyword id="KW-1043">Host membrane</keyword>
<keyword id="KW-0945">Host-virus interaction</keyword>
<keyword id="KW-0472">Membrane</keyword>
<keyword id="KW-1152">Outer capsid protein</keyword>
<keyword id="KW-1161">Viral attachment to host cell</keyword>
<keyword id="KW-1162">Viral penetration into host cytoplasm</keyword>
<keyword id="KW-1173">Viral penetration via permeabilization of host membrane</keyword>
<keyword id="KW-0946">Virion</keyword>
<keyword id="KW-1160">Virus entry into host cell</keyword>
<accession>Q8JNB1</accession>
<organismHost>
    <name type="scientific">Sus scrofa</name>
    <name type="common">Pig</name>
    <dbReference type="NCBI Taxonomy" id="9823"/>
</organismHost>
<feature type="chain" id="PRO_0000368128" description="Outer capsid protein VP4" evidence="1">
    <location>
        <begin position="1"/>
        <end position="778"/>
    </location>
</feature>
<feature type="chain" id="PRO_0000368129" description="Outer capsid protein VP8*" evidence="1">
    <location>
        <begin position="1"/>
        <end position="233"/>
    </location>
</feature>
<feature type="chain" id="PRO_0000368130" description="Outer capsid protein VP5*" evidence="1">
    <location>
        <begin position="250"/>
        <end position="778"/>
    </location>
</feature>
<feature type="region of interest" description="Spike head" evidence="1">
    <location>
        <begin position="65"/>
        <end position="226"/>
    </location>
</feature>
<feature type="region of interest" description="Spike body and stalk (antigen domain)" evidence="1">
    <location>
        <begin position="250"/>
        <end position="481"/>
    </location>
</feature>
<feature type="region of interest" description="Hydrophobic; possible role in virus entry into host cell" evidence="1">
    <location>
        <begin position="391"/>
        <end position="411"/>
    </location>
</feature>
<feature type="region of interest" description="Spike foot" evidence="1">
    <location>
        <begin position="512"/>
        <end position="778"/>
    </location>
</feature>
<feature type="coiled-coil region" evidence="1">
    <location>
        <begin position="486"/>
        <end position="513"/>
    </location>
</feature>
<feature type="short sequence motif" description="YGL motif; interaction with ITGA4" evidence="1">
    <location>
        <begin position="450"/>
        <end position="452"/>
    </location>
</feature>
<feature type="short sequence motif" description="KID motif; interaction with HSPA8" evidence="1">
    <location>
        <begin position="646"/>
        <end position="648"/>
    </location>
</feature>
<feature type="site" description="Cleavage" evidence="1">
    <location>
        <begin position="233"/>
        <end position="234"/>
    </location>
</feature>
<feature type="site" description="Cleavage" evidence="1">
    <location>
        <begin position="243"/>
        <end position="244"/>
    </location>
</feature>
<feature type="site" description="Cleavage; associated with enhancement of infectivity" evidence="1">
    <location>
        <begin position="249"/>
        <end position="250"/>
    </location>
</feature>
<feature type="disulfide bond" evidence="1">
    <location>
        <begin position="205"/>
        <end position="218"/>
    </location>
</feature>
<feature type="disulfide bond" evidence="1">
    <location>
        <begin position="320"/>
        <end position="382"/>
    </location>
</feature>
<reference key="1">
    <citation type="journal article" date="2003" name="Virology">
        <title>A novel type of VP4 carried by a porcine rotavirus strain.</title>
        <authorList>
            <person name="Liprandi F."/>
            <person name="Gerder M."/>
            <person name="Bastidas Z."/>
            <person name="Lopez J.A."/>
            <person name="Pujol F.H."/>
            <person name="Ludert J.E."/>
            <person name="Joelsson D.B."/>
            <person name="Ciarlet M."/>
        </authorList>
    </citation>
    <scope>NUCLEOTIDE SEQUENCE [MRNA]</scope>
</reference>
<reference key="2">
    <citation type="journal article" date="2002" name="J. Virol.">
        <title>Initial interaction of rotavirus strains with N-acetylneuraminic (sialic) acid residues on the cell surface correlates with VP4 genotype, not species of origin.</title>
        <authorList>
            <person name="Ciarlet M."/>
            <person name="Ludert J.E."/>
            <person name="Iturriza-Gomara M."/>
            <person name="Liprandi F."/>
            <person name="Gray J.J."/>
            <person name="Desselberger U."/>
            <person name="Estes M.K."/>
        </authorList>
    </citation>
    <scope>SIALIC ACID INDEPENDENCY</scope>
</reference>
<reference key="3">
    <citation type="journal article" date="2006" name="Glycoconj. J.">
        <title>Role of sialic acids in rotavirus infection.</title>
        <authorList>
            <person name="Isa P."/>
            <person name="Arias C.F."/>
            <person name="Lopez S."/>
        </authorList>
    </citation>
    <scope>REVIEW</scope>
</reference>
<protein>
    <recommendedName>
        <fullName evidence="1">Outer capsid protein VP4</fullName>
    </recommendedName>
    <alternativeName>
        <fullName evidence="1">Hemagglutinin</fullName>
    </alternativeName>
    <component>
        <recommendedName>
            <fullName evidence="1">Outer capsid protein VP8*</fullName>
        </recommendedName>
    </component>
    <component>
        <recommendedName>
            <fullName evidence="1">Outer capsid protein VP5*</fullName>
        </recommendedName>
    </component>
</protein>
<proteinExistence type="evidence at transcript level"/>
<comment type="function">
    <molecule>Outer capsid protein VP4</molecule>
    <text evidence="1">Spike-forming protein that mediates virion attachment to the host epithelial cell receptors and plays a major role in cell penetration, determination of host range restriction and virulence. Rotavirus attachment and entry into the host cell probably involves multiple sequential contacts between the outer capsid proteins VP4 and VP7, and the cell receptors. It is subsequently lost, together with VP7, following virus entry into the host cell. Following entry into the host cell, low intracellular or intravesicular Ca(2+) concentration probably causes the calcium-stabilized VP7 trimers to dissociate from the virion. This step is probably necessary for the membrane-disrupting entry step and the release of VP4, which is locked onto the virion by VP7. During the virus exit from the host cell, VP4 seems to be required to target the newly formed virions to the host cell lipid rafts.</text>
</comment>
<comment type="function">
    <molecule>Outer capsid protein VP5*</molecule>
    <text evidence="1">Forms the spike 'foot' and 'body' and acts as a membrane permeabilization protein that mediates release of viral particles from endosomal compartments into the cytoplasm. During entry, the part of VP5* that protrudes from the virus folds back on itself and reorganizes from a local dimer to a trimer. This reorganization may be linked to membrane penetration by exposing VP5* hydrophobic region. In integrin-dependent strains, VP5* targets the integrin heterodimer ITGA2/ITGB1 for cell attachment.</text>
</comment>
<comment type="function">
    <molecule>Outer capsid protein VP8*</molecule>
    <text evidence="1">Forms the head of the spikes and mediates the recognition of specific host cell surface glycans. It is the viral hemagglutinin and an important target of neutralizing antibodies. In sialic acid-dependent strains, VP8* binds to host cell sialic acid, most probably a ganglioside, providing the initial contact. In some other strains, VP8* mediates the attachment to histo-blood group antigens (HBGAs) for viral entry.</text>
</comment>
<comment type="subunit">
    <molecule>Outer capsid protein VP4</molecule>
    <text evidence="1">Homotrimer. VP4 adopts a dimeric appearance above the capsid surface, while forming a trimeric base anchored inside the capsid layer. Only hints of the third molecule are observed above the capsid surface. It probably performs a series of molecular rearrangements during viral entry. Prior to trypsin cleavage, it is flexible. The priming trypsin cleavage triggers its rearrangement into rigid spikes with approximate two-fold symmetry of their protruding parts. After an unknown second triggering event, cleaved VP4 may undergo another rearrangement, in which two VP5* subunits fold back on themselves and join a third subunit to form a tightly associated trimer, shaped like a folded umbrella. Interacts with VP6. Interacts with VP7.</text>
</comment>
<comment type="subunit">
    <molecule>Outer capsid protein VP5*</molecule>
    <text evidence="1">Homotrimer. The trimer is coiled-coil stabilized by its C-terminus, however, its N-terminus, known as antigen domain or 'body', seems to be flexible allowing it to self-associate either as a dimer or a trimer.</text>
</comment>
<comment type="subcellular location">
    <molecule>Outer capsid protein VP4</molecule>
    <subcellularLocation>
        <location evidence="1">Virion</location>
    </subcellularLocation>
    <subcellularLocation>
        <location evidence="1">Host rough endoplasmic reticulum</location>
    </subcellularLocation>
    <subcellularLocation>
        <location evidence="1">Host cell membrane</location>
    </subcellularLocation>
    <subcellularLocation>
        <location evidence="1">Host cytoplasm</location>
        <location evidence="1">Host cytoskeleton</location>
    </subcellularLocation>
    <subcellularLocation>
        <location evidence="1">Host endoplasmic reticulum-Golgi intermediate compartment</location>
    </subcellularLocation>
    <text evidence="1">The outer layer contains 180 copies of VP4, grouped as 60 dimers. Immature double-layered particles assembled in the cytoplasm bud across the membrane of the endoplasmic reticulum, acquiring during this process a transient lipid membrane that is modified with the ER resident viral glycoproteins NSP4 and VP7; these enveloped particles also contain VP4. As the particles move towards the interior of the ER cisternae, the transient lipid membrane and the non-structural protein NSP4 are lost, while the virus surface proteins VP4 and VP7 rearrange to form the outermost virus protein layer, yielding mature infectious triple-layered particles. VP4 also seems to associate with lipid rafts of the host cell membrane probably for the exit of the virus from the infected cell by an alternate pathway.</text>
</comment>
<comment type="subcellular location">
    <molecule>Outer capsid protein VP8*</molecule>
    <subcellularLocation>
        <location evidence="1">Virion</location>
    </subcellularLocation>
    <text evidence="1">Outer capsid protein.</text>
</comment>
<comment type="subcellular location">
    <molecule>Outer capsid protein VP5*</molecule>
    <subcellularLocation>
        <location evidence="1">Virion</location>
    </subcellularLocation>
    <text evidence="1">Outer capsid protein.</text>
</comment>
<comment type="domain">
    <molecule>Outer capsid protein VP4</molecule>
    <text evidence="1">The VP4 spike is divided into a foot, a stalk and body, and a head.</text>
</comment>
<comment type="PTM">
    <molecule>Outer capsid protein VP4</molecule>
    <text evidence="1">Proteolytic cleavage by trypsin results in activation of VP4 functions and greatly increases infectivity. The penetration into the host cell is dependent on trypsin treatment of VP4. It produces two peptides, VP5* and VP8* that remain associated with the virion. Cleavage of VP4 by trypsin probably occurs in vivo in the lumen of the intestine prior to infection of enterocytes. Trypsin seems to be incorporated into the three-layered viral particles but remains inactive as long as the viral outer capsid is intact and would only be activated upon the solubilization of the latter.</text>
</comment>
<comment type="miscellaneous">
    <text evidence="2 3">This strain probably does not use sialic acid to attach to the host cell.</text>
</comment>
<comment type="miscellaneous">
    <text evidence="1">In group A rotaviruses, VP4 defines the P serotype.</text>
</comment>
<comment type="miscellaneous">
    <text evidence="1">Some rotavirus strains are neuraminidase-sensitive and require sialic acid to attach to the cell surface. Some rotavirus strains are integrin-dependent. Some rotavirus strains depend on ganglioside for their entry into the host cell. Hsp70 also seems to be involved in the entry of some strains.</text>
</comment>
<comment type="similarity">
    <text evidence="1">Belongs to the rotavirus VP4 family.</text>
</comment>